<dbReference type="EC" id="2.7.7.77" evidence="1"/>
<dbReference type="EMBL" id="BX571856">
    <property type="protein sequence ID" value="CAG41334.1"/>
    <property type="molecule type" value="Genomic_DNA"/>
</dbReference>
<dbReference type="RefSeq" id="WP_000643988.1">
    <property type="nucleotide sequence ID" value="NC_002952.2"/>
</dbReference>
<dbReference type="SMR" id="Q6GEG5"/>
<dbReference type="KEGG" id="sar:SAR2353"/>
<dbReference type="HOGENOM" id="CLU_055597_2_0_9"/>
<dbReference type="Proteomes" id="UP000000596">
    <property type="component" value="Chromosome"/>
</dbReference>
<dbReference type="GO" id="GO:0005737">
    <property type="term" value="C:cytoplasm"/>
    <property type="evidence" value="ECO:0007669"/>
    <property type="project" value="UniProtKB-SubCell"/>
</dbReference>
<dbReference type="GO" id="GO:0005525">
    <property type="term" value="F:GTP binding"/>
    <property type="evidence" value="ECO:0007669"/>
    <property type="project" value="UniProtKB-UniRule"/>
</dbReference>
<dbReference type="GO" id="GO:0046872">
    <property type="term" value="F:metal ion binding"/>
    <property type="evidence" value="ECO:0007669"/>
    <property type="project" value="UniProtKB-KW"/>
</dbReference>
<dbReference type="GO" id="GO:0061603">
    <property type="term" value="F:molybdenum cofactor guanylyltransferase activity"/>
    <property type="evidence" value="ECO:0007669"/>
    <property type="project" value="UniProtKB-EC"/>
</dbReference>
<dbReference type="GO" id="GO:0006777">
    <property type="term" value="P:Mo-molybdopterin cofactor biosynthetic process"/>
    <property type="evidence" value="ECO:0007669"/>
    <property type="project" value="UniProtKB-KW"/>
</dbReference>
<dbReference type="CDD" id="cd02503">
    <property type="entry name" value="MobA"/>
    <property type="match status" value="1"/>
</dbReference>
<dbReference type="Gene3D" id="3.90.550.10">
    <property type="entry name" value="Spore Coat Polysaccharide Biosynthesis Protein SpsA, Chain A"/>
    <property type="match status" value="1"/>
</dbReference>
<dbReference type="HAMAP" id="MF_00316">
    <property type="entry name" value="MobA"/>
    <property type="match status" value="1"/>
</dbReference>
<dbReference type="InterPro" id="IPR025877">
    <property type="entry name" value="MobA-like_NTP_Trfase"/>
</dbReference>
<dbReference type="InterPro" id="IPR013482">
    <property type="entry name" value="Molybde_CF_guanTrfase"/>
</dbReference>
<dbReference type="InterPro" id="IPR029044">
    <property type="entry name" value="Nucleotide-diphossugar_trans"/>
</dbReference>
<dbReference type="NCBIfam" id="NF001457">
    <property type="entry name" value="PRK00317.1-3"/>
    <property type="match status" value="1"/>
</dbReference>
<dbReference type="PANTHER" id="PTHR19136">
    <property type="entry name" value="MOLYBDENUM COFACTOR GUANYLYLTRANSFERASE"/>
    <property type="match status" value="1"/>
</dbReference>
<dbReference type="PANTHER" id="PTHR19136:SF81">
    <property type="entry name" value="MOLYBDENUM COFACTOR GUANYLYLTRANSFERASE"/>
    <property type="match status" value="1"/>
</dbReference>
<dbReference type="Pfam" id="PF12804">
    <property type="entry name" value="NTP_transf_3"/>
    <property type="match status" value="1"/>
</dbReference>
<dbReference type="SUPFAM" id="SSF53448">
    <property type="entry name" value="Nucleotide-diphospho-sugar transferases"/>
    <property type="match status" value="1"/>
</dbReference>
<protein>
    <recommendedName>
        <fullName evidence="1">Probable molybdenum cofactor guanylyltransferase</fullName>
        <shortName evidence="1">MoCo guanylyltransferase</shortName>
        <ecNumber evidence="1">2.7.7.77</ecNumber>
    </recommendedName>
    <alternativeName>
        <fullName evidence="1">GTP:molybdopterin guanylyltransferase</fullName>
    </alternativeName>
    <alternativeName>
        <fullName evidence="1">Mo-MPT guanylyltransferase</fullName>
    </alternativeName>
    <alternativeName>
        <fullName evidence="1">Molybdopterin guanylyltransferase</fullName>
    </alternativeName>
    <alternativeName>
        <fullName evidence="1">Molybdopterin-guanine dinucleotide synthase</fullName>
        <shortName evidence="1">MGD synthase</shortName>
    </alternativeName>
</protein>
<evidence type="ECO:0000255" key="1">
    <source>
        <dbReference type="HAMAP-Rule" id="MF_00316"/>
    </source>
</evidence>
<proteinExistence type="inferred from homology"/>
<keyword id="KW-0963">Cytoplasm</keyword>
<keyword id="KW-0342">GTP-binding</keyword>
<keyword id="KW-0460">Magnesium</keyword>
<keyword id="KW-0479">Metal-binding</keyword>
<keyword id="KW-0501">Molybdenum cofactor biosynthesis</keyword>
<keyword id="KW-0547">Nucleotide-binding</keyword>
<keyword id="KW-0808">Transferase</keyword>
<comment type="function">
    <text evidence="1">Transfers a GMP moiety from GTP to Mo-molybdopterin (Mo-MPT) cofactor (Moco or molybdenum cofactor) to form Mo-molybdopterin guanine dinucleotide (Mo-MGD) cofactor.</text>
</comment>
<comment type="catalytic activity">
    <reaction evidence="1">
        <text>Mo-molybdopterin + GTP + H(+) = Mo-molybdopterin guanine dinucleotide + diphosphate</text>
        <dbReference type="Rhea" id="RHEA:34243"/>
        <dbReference type="ChEBI" id="CHEBI:15378"/>
        <dbReference type="ChEBI" id="CHEBI:33019"/>
        <dbReference type="ChEBI" id="CHEBI:37565"/>
        <dbReference type="ChEBI" id="CHEBI:71302"/>
        <dbReference type="ChEBI" id="CHEBI:71310"/>
        <dbReference type="EC" id="2.7.7.77"/>
    </reaction>
</comment>
<comment type="cofactor">
    <cofactor evidence="1">
        <name>Mg(2+)</name>
        <dbReference type="ChEBI" id="CHEBI:18420"/>
    </cofactor>
</comment>
<comment type="subcellular location">
    <subcellularLocation>
        <location evidence="1">Cytoplasm</location>
    </subcellularLocation>
</comment>
<comment type="domain">
    <text evidence="1">The N-terminal domain determines nucleotide recognition and specific binding, while the C-terminal domain determines the specific binding to the target protein.</text>
</comment>
<comment type="similarity">
    <text evidence="1">Belongs to the MobA family.</text>
</comment>
<feature type="chain" id="PRO_0000134914" description="Probable molybdenum cofactor guanylyltransferase">
    <location>
        <begin position="1"/>
        <end position="199"/>
    </location>
</feature>
<feature type="binding site" evidence="1">
    <location>
        <begin position="6"/>
        <end position="8"/>
    </location>
    <ligand>
        <name>GTP</name>
        <dbReference type="ChEBI" id="CHEBI:37565"/>
    </ligand>
</feature>
<feature type="binding site" evidence="1">
    <location>
        <position position="18"/>
    </location>
    <ligand>
        <name>GTP</name>
        <dbReference type="ChEBI" id="CHEBI:37565"/>
    </ligand>
</feature>
<feature type="binding site" evidence="1">
    <location>
        <position position="65"/>
    </location>
    <ligand>
        <name>GTP</name>
        <dbReference type="ChEBI" id="CHEBI:37565"/>
    </ligand>
</feature>
<feature type="binding site" evidence="1">
    <location>
        <position position="97"/>
    </location>
    <ligand>
        <name>GTP</name>
        <dbReference type="ChEBI" id="CHEBI:37565"/>
    </ligand>
</feature>
<feature type="binding site" evidence="1">
    <location>
        <position position="97"/>
    </location>
    <ligand>
        <name>Mg(2+)</name>
        <dbReference type="ChEBI" id="CHEBI:18420"/>
    </ligand>
</feature>
<gene>
    <name evidence="1" type="primary">mobA</name>
    <name type="ordered locus">SAR2353</name>
</gene>
<sequence>MKAIILAGGHSVRFGKPKAFAEVNGETFYSRVIKTLESTNMFNEIIISTNAQLATQFKYPNVVIDDENHNDKGPLAGIYTIMKQHPEEELFFVVSVDTPMITGKAVSTLYQFLVSHLIENHLDVAAFKEDGRFIPTIAFYSPNALGAITKALHSDNYSFKNVYHELSTDYLDVRDVDAPSYWYKNINYQHDLDALIQKL</sequence>
<reference key="1">
    <citation type="journal article" date="2004" name="Proc. Natl. Acad. Sci. U.S.A.">
        <title>Complete genomes of two clinical Staphylococcus aureus strains: evidence for the rapid evolution of virulence and drug resistance.</title>
        <authorList>
            <person name="Holden M.T.G."/>
            <person name="Feil E.J."/>
            <person name="Lindsay J.A."/>
            <person name="Peacock S.J."/>
            <person name="Day N.P.J."/>
            <person name="Enright M.C."/>
            <person name="Foster T.J."/>
            <person name="Moore C.E."/>
            <person name="Hurst L."/>
            <person name="Atkin R."/>
            <person name="Barron A."/>
            <person name="Bason N."/>
            <person name="Bentley S.D."/>
            <person name="Chillingworth C."/>
            <person name="Chillingworth T."/>
            <person name="Churcher C."/>
            <person name="Clark L."/>
            <person name="Corton C."/>
            <person name="Cronin A."/>
            <person name="Doggett J."/>
            <person name="Dowd L."/>
            <person name="Feltwell T."/>
            <person name="Hance Z."/>
            <person name="Harris B."/>
            <person name="Hauser H."/>
            <person name="Holroyd S."/>
            <person name="Jagels K."/>
            <person name="James K.D."/>
            <person name="Lennard N."/>
            <person name="Line A."/>
            <person name="Mayes R."/>
            <person name="Moule S."/>
            <person name="Mungall K."/>
            <person name="Ormond D."/>
            <person name="Quail M.A."/>
            <person name="Rabbinowitsch E."/>
            <person name="Rutherford K.M."/>
            <person name="Sanders M."/>
            <person name="Sharp S."/>
            <person name="Simmonds M."/>
            <person name="Stevens K."/>
            <person name="Whitehead S."/>
            <person name="Barrell B.G."/>
            <person name="Spratt B.G."/>
            <person name="Parkhill J."/>
        </authorList>
    </citation>
    <scope>NUCLEOTIDE SEQUENCE [LARGE SCALE GENOMIC DNA]</scope>
    <source>
        <strain>MRSA252</strain>
    </source>
</reference>
<accession>Q6GEG5</accession>
<organism>
    <name type="scientific">Staphylococcus aureus (strain MRSA252)</name>
    <dbReference type="NCBI Taxonomy" id="282458"/>
    <lineage>
        <taxon>Bacteria</taxon>
        <taxon>Bacillati</taxon>
        <taxon>Bacillota</taxon>
        <taxon>Bacilli</taxon>
        <taxon>Bacillales</taxon>
        <taxon>Staphylococcaceae</taxon>
        <taxon>Staphylococcus</taxon>
    </lineage>
</organism>
<name>MOBA_STAAR</name>